<comment type="subcellular location">
    <subcellularLocation>
        <location evidence="2">Cell membrane</location>
        <topology evidence="2">Multi-pass membrane protein</topology>
    </subcellularLocation>
</comment>
<name>Y986_MYCBO</name>
<organism>
    <name type="scientific">Mycobacterium bovis (strain ATCC BAA-935 / AF2122/97)</name>
    <dbReference type="NCBI Taxonomy" id="233413"/>
    <lineage>
        <taxon>Bacteria</taxon>
        <taxon>Bacillati</taxon>
        <taxon>Actinomycetota</taxon>
        <taxon>Actinomycetes</taxon>
        <taxon>Mycobacteriales</taxon>
        <taxon>Mycobacteriaceae</taxon>
        <taxon>Mycobacterium</taxon>
        <taxon>Mycobacterium tuberculosis complex</taxon>
    </lineage>
</organism>
<dbReference type="EMBL" id="LT708304">
    <property type="protein sequence ID" value="SIT99585.1"/>
    <property type="molecule type" value="Genomic_DNA"/>
</dbReference>
<dbReference type="RefSeq" id="NP_854643.1">
    <property type="nucleotide sequence ID" value="NC_002945.3"/>
</dbReference>
<dbReference type="RefSeq" id="WP_003404907.1">
    <property type="nucleotide sequence ID" value="NC_002945.4"/>
</dbReference>
<dbReference type="KEGG" id="mbo:BQ2027_MB0986"/>
<dbReference type="PATRIC" id="fig|233413.5.peg.1074"/>
<dbReference type="Proteomes" id="UP000001419">
    <property type="component" value="Chromosome"/>
</dbReference>
<dbReference type="GO" id="GO:0005886">
    <property type="term" value="C:plasma membrane"/>
    <property type="evidence" value="ECO:0007669"/>
    <property type="project" value="UniProtKB-SubCell"/>
</dbReference>
<keyword id="KW-1003">Cell membrane</keyword>
<keyword id="KW-0472">Membrane</keyword>
<keyword id="KW-1185">Reference proteome</keyword>
<keyword id="KW-0812">Transmembrane</keyword>
<keyword id="KW-1133">Transmembrane helix</keyword>
<proteinExistence type="predicted"/>
<reference key="1">
    <citation type="journal article" date="2003" name="Proc. Natl. Acad. Sci. U.S.A.">
        <title>The complete genome sequence of Mycobacterium bovis.</title>
        <authorList>
            <person name="Garnier T."/>
            <person name="Eiglmeier K."/>
            <person name="Camus J.-C."/>
            <person name="Medina N."/>
            <person name="Mansoor H."/>
            <person name="Pryor M."/>
            <person name="Duthoy S."/>
            <person name="Grondin S."/>
            <person name="Lacroix C."/>
            <person name="Monsempe C."/>
            <person name="Simon S."/>
            <person name="Harris B."/>
            <person name="Atkin R."/>
            <person name="Doggett J."/>
            <person name="Mayes R."/>
            <person name="Keating L."/>
            <person name="Wheeler P.R."/>
            <person name="Parkhill J."/>
            <person name="Barrell B.G."/>
            <person name="Cole S.T."/>
            <person name="Gordon S.V."/>
            <person name="Hewinson R.G."/>
        </authorList>
    </citation>
    <scope>NUCLEOTIDE SEQUENCE [LARGE SCALE GENOMIC DNA]</scope>
    <source>
        <strain>ATCC BAA-935 / AF2122/97</strain>
    </source>
</reference>
<reference key="2">
    <citation type="journal article" date="2017" name="Genome Announc.">
        <title>Updated reference genome sequence and annotation of Mycobacterium bovis AF2122/97.</title>
        <authorList>
            <person name="Malone K.M."/>
            <person name="Farrell D."/>
            <person name="Stuber T.P."/>
            <person name="Schubert O.T."/>
            <person name="Aebersold R."/>
            <person name="Robbe-Austerman S."/>
            <person name="Gordon S.V."/>
        </authorList>
    </citation>
    <scope>NUCLEOTIDE SEQUENCE [LARGE SCALE GENOMIC DNA]</scope>
    <scope>GENOME REANNOTATION</scope>
    <source>
        <strain>ATCC BAA-935 / AF2122/97</strain>
    </source>
</reference>
<protein>
    <recommendedName>
        <fullName>Uncharacterized protein Mb0986</fullName>
    </recommendedName>
</protein>
<evidence type="ECO:0000255" key="1"/>
<evidence type="ECO:0000305" key="2"/>
<accession>P64776</accession>
<accession>A0A1R3XXA7</accession>
<accession>P71549</accession>
<accession>X2BGN7</accession>
<sequence>MRVPSQWMISSRVTVAWNIVGYLVYAALAFVGGFAVWFSLFFAMATDGCHDSACDASYHVFPAMVTMWIGVGAVLLLTLVVMVRNSSRGNVVIGWPFVGLLALGLVYVAADAVLH</sequence>
<feature type="chain" id="PRO_0000103758" description="Uncharacterized protein Mb0986">
    <location>
        <begin position="1"/>
        <end position="115"/>
    </location>
</feature>
<feature type="transmembrane region" description="Helical" evidence="1">
    <location>
        <begin position="23"/>
        <end position="43"/>
    </location>
</feature>
<feature type="transmembrane region" description="Helical" evidence="1">
    <location>
        <begin position="63"/>
        <end position="83"/>
    </location>
</feature>
<feature type="transmembrane region" description="Helical" evidence="1">
    <location>
        <begin position="90"/>
        <end position="110"/>
    </location>
</feature>
<gene>
    <name type="ordered locus">BQ2027_MB0986</name>
</gene>